<reference key="1">
    <citation type="journal article" date="2006" name="Nat. Biotechnol.">
        <title>Genome sequence of the bioplastic-producing 'Knallgas' bacterium Ralstonia eutropha H16.</title>
        <authorList>
            <person name="Pohlmann A."/>
            <person name="Fricke W.F."/>
            <person name="Reinecke F."/>
            <person name="Kusian B."/>
            <person name="Liesegang H."/>
            <person name="Cramm R."/>
            <person name="Eitinger T."/>
            <person name="Ewering C."/>
            <person name="Poetter M."/>
            <person name="Schwartz E."/>
            <person name="Strittmatter A."/>
            <person name="Voss I."/>
            <person name="Gottschalk G."/>
            <person name="Steinbuechel A."/>
            <person name="Friedrich B."/>
            <person name="Bowien B."/>
        </authorList>
    </citation>
    <scope>NUCLEOTIDE SEQUENCE [LARGE SCALE GENOMIC DNA]</scope>
    <source>
        <strain>ATCC 17699 / DSM 428 / KCTC 22496 / NCIMB 10442 / H16 / Stanier 337</strain>
    </source>
</reference>
<sequence length="322" mass="35207">MSAVPHDSATHPPVVCLLGPTASGKTAAALALAADAPVEIISLDSALVYREMDIGTAKPTREELAAAPHHLIDIIDPADSYSAAQFVTDAERLIAQIRARGHVPLIVGGTMLYYKALTQGLNDLPQADAALRAELDQLAAERGWPALHAMLAEVDPVTAARLAPNDAQRIQRALEIHRLSGQPMSALLARQAEGRTFAGAADQRFRVIALEPSDRLALHARIAQRYDAMLANGFIEEVERLRRRGDLHPGLPSIRCVGYRQVWEYLDGDADFATMRERGIAATRQLCKRQLTWLRSTPERLVVDCLAPGYVDQVRRLADFGH</sequence>
<organism>
    <name type="scientific">Cupriavidus necator (strain ATCC 17699 / DSM 428 / KCTC 22496 / NCIMB 10442 / H16 / Stanier 337)</name>
    <name type="common">Ralstonia eutropha</name>
    <dbReference type="NCBI Taxonomy" id="381666"/>
    <lineage>
        <taxon>Bacteria</taxon>
        <taxon>Pseudomonadati</taxon>
        <taxon>Pseudomonadota</taxon>
        <taxon>Betaproteobacteria</taxon>
        <taxon>Burkholderiales</taxon>
        <taxon>Burkholderiaceae</taxon>
        <taxon>Cupriavidus</taxon>
    </lineage>
</organism>
<name>MIAA_CUPNH</name>
<protein>
    <recommendedName>
        <fullName evidence="1">tRNA dimethylallyltransferase</fullName>
        <ecNumber evidence="1">2.5.1.75</ecNumber>
    </recommendedName>
    <alternativeName>
        <fullName evidence="1">Dimethylallyl diphosphate:tRNA dimethylallyltransferase</fullName>
        <shortName evidence="1">DMAPP:tRNA dimethylallyltransferase</shortName>
        <shortName evidence="1">DMATase</shortName>
    </alternativeName>
    <alternativeName>
        <fullName evidence="1">Isopentenyl-diphosphate:tRNA isopentenyltransferase</fullName>
        <shortName evidence="1">IPP transferase</shortName>
        <shortName evidence="1">IPPT</shortName>
        <shortName evidence="1">IPTase</shortName>
    </alternativeName>
</protein>
<accession>Q0K776</accession>
<keyword id="KW-0067">ATP-binding</keyword>
<keyword id="KW-0460">Magnesium</keyword>
<keyword id="KW-0547">Nucleotide-binding</keyword>
<keyword id="KW-1185">Reference proteome</keyword>
<keyword id="KW-0808">Transferase</keyword>
<keyword id="KW-0819">tRNA processing</keyword>
<evidence type="ECO:0000255" key="1">
    <source>
        <dbReference type="HAMAP-Rule" id="MF_00185"/>
    </source>
</evidence>
<feature type="chain" id="PRO_0000377276" description="tRNA dimethylallyltransferase">
    <location>
        <begin position="1"/>
        <end position="322"/>
    </location>
</feature>
<feature type="region of interest" description="Interaction with substrate tRNA" evidence="1">
    <location>
        <begin position="44"/>
        <end position="47"/>
    </location>
</feature>
<feature type="region of interest" description="Interaction with substrate tRNA" evidence="1">
    <location>
        <begin position="168"/>
        <end position="172"/>
    </location>
</feature>
<feature type="region of interest" description="Interaction with substrate tRNA" evidence="1">
    <location>
        <begin position="255"/>
        <end position="260"/>
    </location>
</feature>
<feature type="binding site" evidence="1">
    <location>
        <begin position="19"/>
        <end position="26"/>
    </location>
    <ligand>
        <name>ATP</name>
        <dbReference type="ChEBI" id="CHEBI:30616"/>
    </ligand>
</feature>
<feature type="binding site" evidence="1">
    <location>
        <begin position="21"/>
        <end position="26"/>
    </location>
    <ligand>
        <name>substrate</name>
    </ligand>
</feature>
<feature type="site" description="Interaction with substrate tRNA" evidence="1">
    <location>
        <position position="110"/>
    </location>
</feature>
<feature type="site" description="Interaction with substrate tRNA" evidence="1">
    <location>
        <position position="132"/>
    </location>
</feature>
<dbReference type="EC" id="2.5.1.75" evidence="1"/>
<dbReference type="EMBL" id="AM260479">
    <property type="protein sequence ID" value="CAJ94145.1"/>
    <property type="molecule type" value="Genomic_DNA"/>
</dbReference>
<dbReference type="RefSeq" id="WP_010815015.1">
    <property type="nucleotide sequence ID" value="NZ_CP039287.1"/>
</dbReference>
<dbReference type="SMR" id="Q0K776"/>
<dbReference type="STRING" id="381666.H16_A3070"/>
<dbReference type="KEGG" id="reh:H16_A3070"/>
<dbReference type="eggNOG" id="COG0324">
    <property type="taxonomic scope" value="Bacteria"/>
</dbReference>
<dbReference type="HOGENOM" id="CLU_032616_0_0_4"/>
<dbReference type="OrthoDB" id="9776390at2"/>
<dbReference type="Proteomes" id="UP000008210">
    <property type="component" value="Chromosome 1"/>
</dbReference>
<dbReference type="GO" id="GO:0005524">
    <property type="term" value="F:ATP binding"/>
    <property type="evidence" value="ECO:0007669"/>
    <property type="project" value="UniProtKB-UniRule"/>
</dbReference>
<dbReference type="GO" id="GO:0052381">
    <property type="term" value="F:tRNA dimethylallyltransferase activity"/>
    <property type="evidence" value="ECO:0007669"/>
    <property type="project" value="UniProtKB-UniRule"/>
</dbReference>
<dbReference type="GO" id="GO:0006400">
    <property type="term" value="P:tRNA modification"/>
    <property type="evidence" value="ECO:0007669"/>
    <property type="project" value="TreeGrafter"/>
</dbReference>
<dbReference type="FunFam" id="1.10.20.140:FF:000001">
    <property type="entry name" value="tRNA dimethylallyltransferase"/>
    <property type="match status" value="1"/>
</dbReference>
<dbReference type="Gene3D" id="1.10.20.140">
    <property type="match status" value="1"/>
</dbReference>
<dbReference type="Gene3D" id="3.40.50.300">
    <property type="entry name" value="P-loop containing nucleotide triphosphate hydrolases"/>
    <property type="match status" value="1"/>
</dbReference>
<dbReference type="HAMAP" id="MF_00185">
    <property type="entry name" value="IPP_trans"/>
    <property type="match status" value="1"/>
</dbReference>
<dbReference type="InterPro" id="IPR039657">
    <property type="entry name" value="Dimethylallyltransferase"/>
</dbReference>
<dbReference type="InterPro" id="IPR018022">
    <property type="entry name" value="IPT"/>
</dbReference>
<dbReference type="InterPro" id="IPR027417">
    <property type="entry name" value="P-loop_NTPase"/>
</dbReference>
<dbReference type="NCBIfam" id="TIGR00174">
    <property type="entry name" value="miaA"/>
    <property type="match status" value="1"/>
</dbReference>
<dbReference type="PANTHER" id="PTHR11088">
    <property type="entry name" value="TRNA DIMETHYLALLYLTRANSFERASE"/>
    <property type="match status" value="1"/>
</dbReference>
<dbReference type="PANTHER" id="PTHR11088:SF60">
    <property type="entry name" value="TRNA DIMETHYLALLYLTRANSFERASE"/>
    <property type="match status" value="1"/>
</dbReference>
<dbReference type="Pfam" id="PF01715">
    <property type="entry name" value="IPPT"/>
    <property type="match status" value="1"/>
</dbReference>
<dbReference type="SUPFAM" id="SSF52540">
    <property type="entry name" value="P-loop containing nucleoside triphosphate hydrolases"/>
    <property type="match status" value="2"/>
</dbReference>
<gene>
    <name evidence="1" type="primary">miaA</name>
    <name type="ordered locus">H16_A3070</name>
</gene>
<comment type="function">
    <text evidence="1">Catalyzes the transfer of a dimethylallyl group onto the adenine at position 37 in tRNAs that read codons beginning with uridine, leading to the formation of N6-(dimethylallyl)adenosine (i(6)A).</text>
</comment>
<comment type="catalytic activity">
    <reaction evidence="1">
        <text>adenosine(37) in tRNA + dimethylallyl diphosphate = N(6)-dimethylallyladenosine(37) in tRNA + diphosphate</text>
        <dbReference type="Rhea" id="RHEA:26482"/>
        <dbReference type="Rhea" id="RHEA-COMP:10162"/>
        <dbReference type="Rhea" id="RHEA-COMP:10375"/>
        <dbReference type="ChEBI" id="CHEBI:33019"/>
        <dbReference type="ChEBI" id="CHEBI:57623"/>
        <dbReference type="ChEBI" id="CHEBI:74411"/>
        <dbReference type="ChEBI" id="CHEBI:74415"/>
        <dbReference type="EC" id="2.5.1.75"/>
    </reaction>
</comment>
<comment type="cofactor">
    <cofactor evidence="1">
        <name>Mg(2+)</name>
        <dbReference type="ChEBI" id="CHEBI:18420"/>
    </cofactor>
</comment>
<comment type="subunit">
    <text evidence="1">Monomer.</text>
</comment>
<comment type="similarity">
    <text evidence="1">Belongs to the IPP transferase family.</text>
</comment>
<proteinExistence type="inferred from homology"/>